<keyword id="KW-0963">Cytoplasm</keyword>
<keyword id="KW-0378">Hydrolase</keyword>
<keyword id="KW-0645">Protease</keyword>
<keyword id="KW-1185">Reference proteome</keyword>
<keyword id="KW-0720">Serine protease</keyword>
<comment type="function">
    <text evidence="1">Cleaves peptides in various proteins in a process that requires ATP hydrolysis. Has a chymotrypsin-like activity. Plays a major role in the degradation of misfolded proteins.</text>
</comment>
<comment type="catalytic activity">
    <reaction evidence="1">
        <text>Hydrolysis of proteins to small peptides in the presence of ATP and magnesium. alpha-casein is the usual test substrate. In the absence of ATP, only oligopeptides shorter than five residues are hydrolyzed (such as succinyl-Leu-Tyr-|-NHMec, and Leu-Tyr-Leu-|-Tyr-Trp, in which cleavage of the -Tyr-|-Leu- and -Tyr-|-Trp bonds also occurs).</text>
        <dbReference type="EC" id="3.4.21.92"/>
    </reaction>
</comment>
<comment type="subunit">
    <text evidence="1">Fourteen ClpP subunits assemble into 2 heptameric rings which stack back to back to give a disk-like structure with a central cavity, resembling the structure of eukaryotic proteasomes. Component of the ClpAP and ClpXP complexes.</text>
</comment>
<comment type="subcellular location">
    <subcellularLocation>
        <location evidence="1">Cytoplasm</location>
    </subcellularLocation>
</comment>
<comment type="similarity">
    <text evidence="1">Belongs to the peptidase S14 family.</text>
</comment>
<accession>P0A6H0</accession>
<accession>P19245</accession>
<sequence>MSYSGERDNFAPHMALVPMVIEQTSRGERSFDIYSRLLKERVIFLTGQVEDHMANLIVAQMLFLEAENPEKDIYLYINSPGGVITAGMSIYDTMQFIKPDVSTICMGQAASMGAFLLTAGAKGKRFCLPNSRVMIHQPLGGYQGQATDIEIHAREILKVKGRMNELMALHTGQSLEQIERDTERDRFLSAPEAVEYGLVDSILTHRN</sequence>
<proteinExistence type="inferred from homology"/>
<protein>
    <recommendedName>
        <fullName evidence="1">ATP-dependent Clp protease proteolytic subunit</fullName>
        <ecNumber evidence="1">3.4.21.92</ecNumber>
    </recommendedName>
    <alternativeName>
        <fullName evidence="1">Endopeptidase Clp</fullName>
    </alternativeName>
</protein>
<feature type="chain" id="PRO_0000179647" description="ATP-dependent Clp protease proteolytic subunit">
    <location>
        <begin position="1"/>
        <end position="207"/>
    </location>
</feature>
<feature type="active site" description="Nucleophile" evidence="1">
    <location>
        <position position="111"/>
    </location>
</feature>
<feature type="active site" evidence="1">
    <location>
        <position position="136"/>
    </location>
</feature>
<name>CLPP_SHIFL</name>
<organism>
    <name type="scientific">Shigella flexneri</name>
    <dbReference type="NCBI Taxonomy" id="623"/>
    <lineage>
        <taxon>Bacteria</taxon>
        <taxon>Pseudomonadati</taxon>
        <taxon>Pseudomonadota</taxon>
        <taxon>Gammaproteobacteria</taxon>
        <taxon>Enterobacterales</taxon>
        <taxon>Enterobacteriaceae</taxon>
        <taxon>Shigella</taxon>
    </lineage>
</organism>
<reference key="1">
    <citation type="journal article" date="2002" name="Nucleic Acids Res.">
        <title>Genome sequence of Shigella flexneri 2a: insights into pathogenicity through comparison with genomes of Escherichia coli K12 and O157.</title>
        <authorList>
            <person name="Jin Q."/>
            <person name="Yuan Z."/>
            <person name="Xu J."/>
            <person name="Wang Y."/>
            <person name="Shen Y."/>
            <person name="Lu W."/>
            <person name="Wang J."/>
            <person name="Liu H."/>
            <person name="Yang J."/>
            <person name="Yang F."/>
            <person name="Zhang X."/>
            <person name="Zhang J."/>
            <person name="Yang G."/>
            <person name="Wu H."/>
            <person name="Qu D."/>
            <person name="Dong J."/>
            <person name="Sun L."/>
            <person name="Xue Y."/>
            <person name="Zhao A."/>
            <person name="Gao Y."/>
            <person name="Zhu J."/>
            <person name="Kan B."/>
            <person name="Ding K."/>
            <person name="Chen S."/>
            <person name="Cheng H."/>
            <person name="Yao Z."/>
            <person name="He B."/>
            <person name="Chen R."/>
            <person name="Ma D."/>
            <person name="Qiang B."/>
            <person name="Wen Y."/>
            <person name="Hou Y."/>
            <person name="Yu J."/>
        </authorList>
    </citation>
    <scope>NUCLEOTIDE SEQUENCE [LARGE SCALE GENOMIC DNA]</scope>
    <source>
        <strain>301 / Serotype 2a</strain>
    </source>
</reference>
<reference key="2">
    <citation type="journal article" date="2003" name="Infect. Immun.">
        <title>Complete genome sequence and comparative genomics of Shigella flexneri serotype 2a strain 2457T.</title>
        <authorList>
            <person name="Wei J."/>
            <person name="Goldberg M.B."/>
            <person name="Burland V."/>
            <person name="Venkatesan M.M."/>
            <person name="Deng W."/>
            <person name="Fournier G."/>
            <person name="Mayhew G.F."/>
            <person name="Plunkett G. III"/>
            <person name="Rose D.J."/>
            <person name="Darling A."/>
            <person name="Mau B."/>
            <person name="Perna N.T."/>
            <person name="Payne S.M."/>
            <person name="Runyen-Janecky L.J."/>
            <person name="Zhou S."/>
            <person name="Schwartz D.C."/>
            <person name="Blattner F.R."/>
        </authorList>
    </citation>
    <scope>NUCLEOTIDE SEQUENCE [LARGE SCALE GENOMIC DNA]</scope>
    <source>
        <strain>ATCC 700930 / 2457T / Serotype 2a</strain>
    </source>
</reference>
<dbReference type="EC" id="3.4.21.92" evidence="1"/>
<dbReference type="EMBL" id="AE005674">
    <property type="protein sequence ID" value="AAN42038.2"/>
    <property type="molecule type" value="Genomic_DNA"/>
</dbReference>
<dbReference type="EMBL" id="AE014073">
    <property type="protein sequence ID" value="AAP15916.1"/>
    <property type="molecule type" value="Genomic_DNA"/>
</dbReference>
<dbReference type="RefSeq" id="NP_706331.2">
    <property type="nucleotide sequence ID" value="NC_004337.2"/>
</dbReference>
<dbReference type="RefSeq" id="WP_000122253.1">
    <property type="nucleotide sequence ID" value="NZ_WPGW01000052.1"/>
</dbReference>
<dbReference type="SMR" id="P0A6H0"/>
<dbReference type="STRING" id="198214.SF0382"/>
<dbReference type="MEROPS" id="S14.001"/>
<dbReference type="PaxDb" id="198214-SF0382"/>
<dbReference type="GeneID" id="1027696"/>
<dbReference type="GeneID" id="93777017"/>
<dbReference type="KEGG" id="sfl:SF0382"/>
<dbReference type="KEGG" id="sfx:S0388"/>
<dbReference type="PATRIC" id="fig|198214.7.peg.440"/>
<dbReference type="HOGENOM" id="CLU_058707_3_2_6"/>
<dbReference type="Proteomes" id="UP000001006">
    <property type="component" value="Chromosome"/>
</dbReference>
<dbReference type="Proteomes" id="UP000002673">
    <property type="component" value="Chromosome"/>
</dbReference>
<dbReference type="GO" id="GO:0005737">
    <property type="term" value="C:cytoplasm"/>
    <property type="evidence" value="ECO:0007669"/>
    <property type="project" value="UniProtKB-SubCell"/>
</dbReference>
<dbReference type="GO" id="GO:0009368">
    <property type="term" value="C:endopeptidase Clp complex"/>
    <property type="evidence" value="ECO:0007669"/>
    <property type="project" value="TreeGrafter"/>
</dbReference>
<dbReference type="GO" id="GO:0004176">
    <property type="term" value="F:ATP-dependent peptidase activity"/>
    <property type="evidence" value="ECO:0007669"/>
    <property type="project" value="InterPro"/>
</dbReference>
<dbReference type="GO" id="GO:0051117">
    <property type="term" value="F:ATPase binding"/>
    <property type="evidence" value="ECO:0007669"/>
    <property type="project" value="TreeGrafter"/>
</dbReference>
<dbReference type="GO" id="GO:0004252">
    <property type="term" value="F:serine-type endopeptidase activity"/>
    <property type="evidence" value="ECO:0007669"/>
    <property type="project" value="UniProtKB-UniRule"/>
</dbReference>
<dbReference type="GO" id="GO:0006515">
    <property type="term" value="P:protein quality control for misfolded or incompletely synthesized proteins"/>
    <property type="evidence" value="ECO:0007669"/>
    <property type="project" value="TreeGrafter"/>
</dbReference>
<dbReference type="CDD" id="cd07017">
    <property type="entry name" value="S14_ClpP_2"/>
    <property type="match status" value="1"/>
</dbReference>
<dbReference type="FunFam" id="3.90.226.10:FF:000001">
    <property type="entry name" value="ATP-dependent Clp protease proteolytic subunit"/>
    <property type="match status" value="1"/>
</dbReference>
<dbReference type="Gene3D" id="3.90.226.10">
    <property type="entry name" value="2-enoyl-CoA Hydratase, Chain A, domain 1"/>
    <property type="match status" value="1"/>
</dbReference>
<dbReference type="HAMAP" id="MF_00444">
    <property type="entry name" value="ClpP"/>
    <property type="match status" value="1"/>
</dbReference>
<dbReference type="InterPro" id="IPR001907">
    <property type="entry name" value="ClpP"/>
</dbReference>
<dbReference type="InterPro" id="IPR029045">
    <property type="entry name" value="ClpP/crotonase-like_dom_sf"/>
</dbReference>
<dbReference type="InterPro" id="IPR023562">
    <property type="entry name" value="ClpP/TepA"/>
</dbReference>
<dbReference type="InterPro" id="IPR033135">
    <property type="entry name" value="ClpP_His_AS"/>
</dbReference>
<dbReference type="InterPro" id="IPR018215">
    <property type="entry name" value="ClpP_Ser_AS"/>
</dbReference>
<dbReference type="NCBIfam" id="TIGR00493">
    <property type="entry name" value="clpP"/>
    <property type="match status" value="1"/>
</dbReference>
<dbReference type="NCBIfam" id="NF001368">
    <property type="entry name" value="PRK00277.1"/>
    <property type="match status" value="1"/>
</dbReference>
<dbReference type="NCBIfam" id="NF009205">
    <property type="entry name" value="PRK12553.1"/>
    <property type="match status" value="1"/>
</dbReference>
<dbReference type="PANTHER" id="PTHR10381">
    <property type="entry name" value="ATP-DEPENDENT CLP PROTEASE PROTEOLYTIC SUBUNIT"/>
    <property type="match status" value="1"/>
</dbReference>
<dbReference type="PANTHER" id="PTHR10381:SF70">
    <property type="entry name" value="ATP-DEPENDENT CLP PROTEASE PROTEOLYTIC SUBUNIT"/>
    <property type="match status" value="1"/>
</dbReference>
<dbReference type="Pfam" id="PF00574">
    <property type="entry name" value="CLP_protease"/>
    <property type="match status" value="1"/>
</dbReference>
<dbReference type="PRINTS" id="PR00127">
    <property type="entry name" value="CLPPROTEASEP"/>
</dbReference>
<dbReference type="SUPFAM" id="SSF52096">
    <property type="entry name" value="ClpP/crotonase"/>
    <property type="match status" value="1"/>
</dbReference>
<dbReference type="PROSITE" id="PS00382">
    <property type="entry name" value="CLP_PROTEASE_HIS"/>
    <property type="match status" value="1"/>
</dbReference>
<dbReference type="PROSITE" id="PS00381">
    <property type="entry name" value="CLP_PROTEASE_SER"/>
    <property type="match status" value="1"/>
</dbReference>
<gene>
    <name evidence="1" type="primary">clpP</name>
    <name type="synonym">lopP</name>
    <name type="ordered locus">SF0382</name>
    <name type="ordered locus">S0388</name>
</gene>
<evidence type="ECO:0000255" key="1">
    <source>
        <dbReference type="HAMAP-Rule" id="MF_00444"/>
    </source>
</evidence>